<accession>P13639</accession>
<accession>A0A384N6H1</accession>
<accession>B2RMP5</accession>
<accession>D6W618</accession>
<accession>Q58J86</accession>
<gene>
    <name type="primary">EEF2</name>
    <name type="synonym">EF2</name>
</gene>
<keyword id="KW-0002">3D-structure</keyword>
<keyword id="KW-0007">Acetylation</keyword>
<keyword id="KW-0013">ADP-ribosylation</keyword>
<keyword id="KW-0963">Cytoplasm</keyword>
<keyword id="KW-0903">Direct protein sequencing</keyword>
<keyword id="KW-0225">Disease variant</keyword>
<keyword id="KW-0251">Elongation factor</keyword>
<keyword id="KW-0342">GTP-binding</keyword>
<keyword id="KW-0378">Hydrolase</keyword>
<keyword id="KW-1017">Isopeptide bond</keyword>
<keyword id="KW-0488">Methylation</keyword>
<keyword id="KW-0523">Neurodegeneration</keyword>
<keyword id="KW-0547">Nucleotide-binding</keyword>
<keyword id="KW-0539">Nucleus</keyword>
<keyword id="KW-0597">Phosphoprotein</keyword>
<keyword id="KW-0648">Protein biosynthesis</keyword>
<keyword id="KW-1267">Proteomics identification</keyword>
<keyword id="KW-1185">Reference proteome</keyword>
<keyword id="KW-0950">Spinocerebellar ataxia</keyword>
<keyword id="KW-0832">Ubl conjugation</keyword>
<evidence type="ECO:0000250" key="1">
    <source>
        <dbReference type="UniProtKB" id="P05197"/>
    </source>
</evidence>
<evidence type="ECO:0000250" key="2">
    <source>
        <dbReference type="UniProtKB" id="P32324"/>
    </source>
</evidence>
<evidence type="ECO:0000250" key="3">
    <source>
        <dbReference type="UniProtKB" id="P58252"/>
    </source>
</evidence>
<evidence type="ECO:0000250" key="4">
    <source>
        <dbReference type="UniProtKB" id="Q7ZXP8"/>
    </source>
</evidence>
<evidence type="ECO:0000255" key="5">
    <source>
        <dbReference type="PROSITE-ProRule" id="PRU01059"/>
    </source>
</evidence>
<evidence type="ECO:0000269" key="6">
    <source>
    </source>
</evidence>
<evidence type="ECO:0000269" key="7">
    <source>
    </source>
</evidence>
<evidence type="ECO:0000269" key="8">
    <source>
    </source>
</evidence>
<evidence type="ECO:0000269" key="9">
    <source>
    </source>
</evidence>
<evidence type="ECO:0000269" key="10">
    <source>
    </source>
</evidence>
<evidence type="ECO:0000269" key="11">
    <source>
    </source>
</evidence>
<evidence type="ECO:0000269" key="12">
    <source>
    </source>
</evidence>
<evidence type="ECO:0000269" key="13">
    <source>
    </source>
</evidence>
<evidence type="ECO:0000269" key="14">
    <source>
    </source>
</evidence>
<evidence type="ECO:0000269" key="15">
    <source>
    </source>
</evidence>
<evidence type="ECO:0000269" key="16">
    <source>
    </source>
</evidence>
<evidence type="ECO:0000269" key="17">
    <source ref="9"/>
</evidence>
<evidence type="ECO:0000305" key="18">
    <source>
    </source>
</evidence>
<evidence type="ECO:0000312" key="19">
    <source>
        <dbReference type="EMBL" id="ADO22554.1"/>
    </source>
</evidence>
<evidence type="ECO:0007744" key="20">
    <source>
        <dbReference type="PDB" id="6Z6M"/>
    </source>
</evidence>
<evidence type="ECO:0007744" key="21">
    <source>
        <dbReference type="PDB" id="6Z6N"/>
    </source>
</evidence>
<evidence type="ECO:0007744" key="22">
    <source>
    </source>
</evidence>
<evidence type="ECO:0007744" key="23">
    <source>
    </source>
</evidence>
<evidence type="ECO:0007744" key="24">
    <source>
    </source>
</evidence>
<evidence type="ECO:0007744" key="25">
    <source>
    </source>
</evidence>
<evidence type="ECO:0007744" key="26">
    <source>
    </source>
</evidence>
<evidence type="ECO:0007744" key="27">
    <source>
    </source>
</evidence>
<evidence type="ECO:0007744" key="28">
    <source>
    </source>
</evidence>
<evidence type="ECO:0007744" key="29">
    <source>
    </source>
</evidence>
<reference key="1">
    <citation type="journal article" date="1989" name="Biol. Chem. Hoppe-Seyler">
        <title>Complete sequence of the coding region of human elongation factor 2 (EF-2) by enzymatic amplification of cDNA from human ovarian granulosa cells.</title>
        <authorList>
            <person name="Rapp G."/>
            <person name="Klaudiny J."/>
            <person name="Hagendorff G."/>
            <person name="Luck M.R."/>
            <person name="Heinz K."/>
        </authorList>
    </citation>
    <scope>NUCLEOTIDE SEQUENCE [MRNA]</scope>
    <source>
        <tissue>Ovary</tissue>
    </source>
</reference>
<reference key="2">
    <citation type="journal article" date="1992" name="Biol. Chem. Hoppe-Seyler">
        <title>Construction of a plasmid containing the complete coding region of human elongation factor 2.</title>
        <authorList>
            <person name="Hanes J."/>
            <person name="Freudenstein J."/>
            <person name="Rapp G."/>
            <person name="Scheit K.H."/>
        </authorList>
    </citation>
    <scope>NUCLEOTIDE SEQUENCE [MRNA]</scope>
</reference>
<reference key="3">
    <citation type="submission" date="2005-02" db="EMBL/GenBank/DDBJ databases">
        <authorList>
            <person name="Ustek D."/>
            <person name="Bektas M."/>
            <person name="Cakiris A."/>
            <person name="Oku B."/>
            <person name="Bermek E."/>
        </authorList>
    </citation>
    <scope>NUCLEOTIDE SEQUENCE [MRNA]</scope>
    <source>
        <tissue>Peripheral blood</tissue>
    </source>
</reference>
<reference evidence="19" key="4">
    <citation type="submission" date="2009-09" db="EMBL/GenBank/DDBJ databases">
        <authorList>
            <person name="Li J.Y."/>
        </authorList>
    </citation>
    <scope>NUCLEOTIDE SEQUENCE [MRNA]</scope>
</reference>
<reference key="5">
    <citation type="submission" date="2005-09" db="EMBL/GenBank/DDBJ databases">
        <authorList>
            <person name="Mural R.J."/>
            <person name="Istrail S."/>
            <person name="Sutton G.G."/>
            <person name="Florea L."/>
            <person name="Halpern A.L."/>
            <person name="Mobarry C.M."/>
            <person name="Lippert R."/>
            <person name="Walenz B."/>
            <person name="Shatkay H."/>
            <person name="Dew I."/>
            <person name="Miller J.R."/>
            <person name="Flanigan M.J."/>
            <person name="Edwards N.J."/>
            <person name="Bolanos R."/>
            <person name="Fasulo D."/>
            <person name="Halldorsson B.V."/>
            <person name="Hannenhalli S."/>
            <person name="Turner R."/>
            <person name="Yooseph S."/>
            <person name="Lu F."/>
            <person name="Nusskern D.R."/>
            <person name="Shue B.C."/>
            <person name="Zheng X.H."/>
            <person name="Zhong F."/>
            <person name="Delcher A.L."/>
            <person name="Huson D.H."/>
            <person name="Kravitz S.A."/>
            <person name="Mouchard L."/>
            <person name="Reinert K."/>
            <person name="Remington K.A."/>
            <person name="Clark A.G."/>
            <person name="Waterman M.S."/>
            <person name="Eichler E.E."/>
            <person name="Adams M.D."/>
            <person name="Hunkapiller M.W."/>
            <person name="Myers E.W."/>
            <person name="Venter J.C."/>
        </authorList>
    </citation>
    <scope>NUCLEOTIDE SEQUENCE [LARGE SCALE GENOMIC DNA]</scope>
</reference>
<reference key="6">
    <citation type="journal article" date="2004" name="Genome Res.">
        <title>The status, quality, and expansion of the NIH full-length cDNA project: the Mammalian Gene Collection (MGC).</title>
        <authorList>
            <consortium name="The MGC Project Team"/>
        </authorList>
    </citation>
    <scope>NUCLEOTIDE SEQUENCE [LARGE SCALE MRNA]</scope>
    <source>
        <tissue>Brain</tissue>
    </source>
</reference>
<reference key="7">
    <citation type="journal article" date="1988" name="Biol. Chem. Hoppe-Seyler">
        <title>Cloning and sequence analysis of a cDNA from human ovarian granulosa cells encoding the C-terminal part of human elongation factor 2.</title>
        <authorList>
            <person name="Rapp G."/>
            <person name="Mucha J."/>
            <person name="Einspanier R."/>
            <person name="Luck M."/>
            <person name="Scheit K.H."/>
        </authorList>
    </citation>
    <scope>NUCLEOTIDE SEQUENCE [MRNA] OF 501-858</scope>
</reference>
<reference key="8">
    <citation type="submission" date="2007-03" db="UniProtKB">
        <authorList>
            <person name="Lubec G."/>
            <person name="Vishwanath V."/>
        </authorList>
    </citation>
    <scope>PROTEIN SEQUENCE OF 796-801</scope>
    <scope>IDENTIFICATION BY MASS SPECTROMETRY</scope>
    <source>
        <tissue>Brain</tissue>
        <tissue>Cajal-Retzius cell</tissue>
    </source>
</reference>
<reference key="9">
    <citation type="submission" date="2001-08" db="UniProtKB">
        <authorList>
            <person name="Bienvenut W.V."/>
        </authorList>
    </citation>
    <scope>CLEAVAGE OF INITIATOR METHIONINE</scope>
</reference>
<reference key="10">
    <citation type="journal article" date="2003" name="Nature">
        <title>Proteomic characterization of the human centrosome by protein correlation profiling.</title>
        <authorList>
            <person name="Andersen J.S."/>
            <person name="Wilkinson C.J."/>
            <person name="Mayor T."/>
            <person name="Mortensen P."/>
            <person name="Nigg E.A."/>
            <person name="Mann M."/>
        </authorList>
    </citation>
    <scope>IDENTIFICATION BY MASS SPECTROMETRY</scope>
    <source>
        <tissue>Lymphoblast</tissue>
    </source>
</reference>
<reference key="11">
    <citation type="journal article" date="2005" name="Biochem. Biophys. Res. Commun.">
        <title>Proteomic identification of proteins conjugated to ISG15 in mouse and human cells.</title>
        <authorList>
            <person name="Giannakopoulos N.V."/>
            <person name="Luo J.K."/>
            <person name="Papov V."/>
            <person name="Zou W."/>
            <person name="Lenschow D.J."/>
            <person name="Jacobs B.S."/>
            <person name="Borden E.C."/>
            <person name="Li J."/>
            <person name="Virgin H.W."/>
            <person name="Zhang D.E."/>
        </authorList>
    </citation>
    <scope>ISGYLATION</scope>
</reference>
<reference key="12">
    <citation type="journal article" date="2006" name="Cell">
        <title>Global, in vivo, and site-specific phosphorylation dynamics in signaling networks.</title>
        <authorList>
            <person name="Olsen J.V."/>
            <person name="Blagoev B."/>
            <person name="Gnad F."/>
            <person name="Macek B."/>
            <person name="Kumar C."/>
            <person name="Mortensen P."/>
            <person name="Mann M."/>
        </authorList>
    </citation>
    <scope>IDENTIFICATION BY MASS SPECTROMETRY [LARGE SCALE ANALYSIS]</scope>
    <source>
        <tissue>Cervix carcinoma</tissue>
    </source>
</reference>
<reference key="13">
    <citation type="journal article" date="2006" name="Mutat. Res.">
        <title>Site-specific mutagenesis of the histidine precursor of diphthamide in the human elongation factor-2 gene confers resistance to diphtheria toxin.</title>
        <authorList>
            <person name="Ivankovic M."/>
            <person name="Rubelj I."/>
            <person name="Matulic M."/>
            <person name="Reich E."/>
            <person name="Brdar B."/>
        </authorList>
    </citation>
    <scope>MUTAGENESIS OF HIS-715</scope>
    <scope>DIPHTHAMIDE AT HIS-715</scope>
</reference>
<reference key="14">
    <citation type="journal article" date="2008" name="Proc. Natl. Acad. Sci. U.S.A.">
        <title>A quantitative atlas of mitotic phosphorylation.</title>
        <authorList>
            <person name="Dephoure N."/>
            <person name="Zhou C."/>
            <person name="Villen J."/>
            <person name="Beausoleil S.A."/>
            <person name="Bakalarski C.E."/>
            <person name="Elledge S.J."/>
            <person name="Gygi S.P."/>
        </authorList>
    </citation>
    <scope>PHOSPHORYLATION [LARGE SCALE ANALYSIS] AT THR-435 AND SER-502</scope>
    <scope>IDENTIFICATION BY MASS SPECTROMETRY [LARGE SCALE ANALYSIS]</scope>
    <source>
        <tissue>Cervix carcinoma</tissue>
    </source>
</reference>
<reference key="15">
    <citation type="journal article" date="2009" name="Anal. Chem.">
        <title>Lys-N and trypsin cover complementary parts of the phosphoproteome in a refined SCX-based approach.</title>
        <authorList>
            <person name="Gauci S."/>
            <person name="Helbig A.O."/>
            <person name="Slijper M."/>
            <person name="Krijgsveld J."/>
            <person name="Heck A.J."/>
            <person name="Mohammed S."/>
        </authorList>
    </citation>
    <scope>IDENTIFICATION BY MASS SPECTROMETRY [LARGE SCALE ANALYSIS]</scope>
</reference>
<reference key="16">
    <citation type="journal article" date="2009" name="Genes Dev.">
        <title>SMG-8 and SMG-9, two novel subunits of the SMG-1 complex, regulate remodeling of the mRNA surveillance complex during nonsense-mediated mRNA decay.</title>
        <authorList>
            <person name="Yamashita A."/>
            <person name="Izumi N."/>
            <person name="Kashima I."/>
            <person name="Ohnishi T."/>
            <person name="Saari B."/>
            <person name="Katsuhata Y."/>
            <person name="Muramatsu R."/>
            <person name="Morita T."/>
            <person name="Iwamatsu A."/>
            <person name="Hachiya T."/>
            <person name="Kurata R."/>
            <person name="Hirano H."/>
            <person name="Anderson P."/>
            <person name="Ohno S."/>
        </authorList>
    </citation>
    <scope>IDENTIFICATION IN THE SURF COMPLEX</scope>
</reference>
<reference key="17">
    <citation type="journal article" date="2009" name="Science">
        <title>Lysine acetylation targets protein complexes and co-regulates major cellular functions.</title>
        <authorList>
            <person name="Choudhary C."/>
            <person name="Kumar C."/>
            <person name="Gnad F."/>
            <person name="Nielsen M.L."/>
            <person name="Rehman M."/>
            <person name="Walther T.C."/>
            <person name="Olsen J.V."/>
            <person name="Mann M."/>
        </authorList>
    </citation>
    <scope>ACETYLATION [LARGE SCALE ANALYSIS] AT LYS-235; LYS-239; LYS-272; LYS-275 AND LYS-445</scope>
    <scope>IDENTIFICATION BY MASS SPECTROMETRY [LARGE SCALE ANALYSIS]</scope>
</reference>
<reference key="18">
    <citation type="journal article" date="2010" name="Sci. Signal.">
        <title>Quantitative phosphoproteomics reveals widespread full phosphorylation site occupancy during mitosis.</title>
        <authorList>
            <person name="Olsen J.V."/>
            <person name="Vermeulen M."/>
            <person name="Santamaria A."/>
            <person name="Kumar C."/>
            <person name="Miller M.L."/>
            <person name="Jensen L.J."/>
            <person name="Gnad F."/>
            <person name="Cox J."/>
            <person name="Jensen T.S."/>
            <person name="Nigg E.A."/>
            <person name="Brunak S."/>
            <person name="Mann M."/>
        </authorList>
    </citation>
    <scope>PHOSPHORYLATION [LARGE SCALE ANALYSIS] AT THR-57; THR-59 AND THR-435</scope>
    <scope>IDENTIFICATION BY MASS SPECTROMETRY [LARGE SCALE ANALYSIS]</scope>
    <source>
        <tissue>Cervix carcinoma</tissue>
    </source>
</reference>
<reference key="19">
    <citation type="journal article" date="2011" name="BMC Syst. Biol.">
        <title>Initial characterization of the human central proteome.</title>
        <authorList>
            <person name="Burkard T.R."/>
            <person name="Planyavsky M."/>
            <person name="Kaupe I."/>
            <person name="Breitwieser F.P."/>
            <person name="Buerckstuemmer T."/>
            <person name="Bennett K.L."/>
            <person name="Superti-Furga G."/>
            <person name="Colinge J."/>
        </authorList>
    </citation>
    <scope>IDENTIFICATION BY MASS SPECTROMETRY [LARGE SCALE ANALYSIS]</scope>
</reference>
<reference key="20">
    <citation type="journal article" date="2011" name="Sci. Signal.">
        <title>System-wide temporal characterization of the proteome and phosphoproteome of human embryonic stem cell differentiation.</title>
        <authorList>
            <person name="Rigbolt K.T."/>
            <person name="Prokhorova T.A."/>
            <person name="Akimov V."/>
            <person name="Henningsen J."/>
            <person name="Johansen P.T."/>
            <person name="Kratchmarova I."/>
            <person name="Kassem M."/>
            <person name="Mann M."/>
            <person name="Olsen J.V."/>
            <person name="Blagoev B."/>
        </authorList>
    </citation>
    <scope>PHOSPHORYLATION [LARGE SCALE ANALYSIS] AT THR-54; THR-57 AND THR-59</scope>
    <scope>IDENTIFICATION BY MASS SPECTROMETRY [LARGE SCALE ANALYSIS]</scope>
</reference>
<reference key="21">
    <citation type="journal article" date="2012" name="Mol. Cell. Proteomics">
        <title>Comparative large-scale characterisation of plant vs. mammal proteins reveals similar and idiosyncratic N-alpha acetylation features.</title>
        <authorList>
            <person name="Bienvenut W.V."/>
            <person name="Sumpton D."/>
            <person name="Martinez A."/>
            <person name="Lilla S."/>
            <person name="Espagne C."/>
            <person name="Meinnel T."/>
            <person name="Giglione C."/>
        </authorList>
    </citation>
    <scope>CLEAVAGE OF INITIATOR METHIONINE [LARGE SCALE ANALYSIS]</scope>
    <scope>IDENTIFICATION BY MASS SPECTROMETRY [LARGE SCALE ANALYSIS]</scope>
</reference>
<reference key="22">
    <citation type="journal article" date="2012" name="Proc. Natl. Acad. Sci. U.S.A.">
        <title>N-terminal acetylome analyses and functional insights of the N-terminal acetyltransferase NatB.</title>
        <authorList>
            <person name="Van Damme P."/>
            <person name="Lasa M."/>
            <person name="Polevoda B."/>
            <person name="Gazquez C."/>
            <person name="Elosegui-Artola A."/>
            <person name="Kim D.S."/>
            <person name="De Juan-Pardo E."/>
            <person name="Demeyer K."/>
            <person name="Hole K."/>
            <person name="Larrea E."/>
            <person name="Timmerman E."/>
            <person name="Prieto J."/>
            <person name="Arnesen T."/>
            <person name="Sherman F."/>
            <person name="Gevaert K."/>
            <person name="Aldabe R."/>
        </authorList>
    </citation>
    <scope>IDENTIFICATION BY MASS SPECTROMETRY [LARGE SCALE ANALYSIS]</scope>
</reference>
<reference key="23">
    <citation type="journal article" date="2013" name="J. Proteome Res.">
        <title>Toward a comprehensive characterization of a human cancer cell phosphoproteome.</title>
        <authorList>
            <person name="Zhou H."/>
            <person name="Di Palma S."/>
            <person name="Preisinger C."/>
            <person name="Peng M."/>
            <person name="Polat A.N."/>
            <person name="Heck A.J."/>
            <person name="Mohammed S."/>
        </authorList>
    </citation>
    <scope>PHOSPHORYLATION [LARGE SCALE ANALYSIS] AT THR-57; THR-59; THR-435; SER-502 AND SER-595</scope>
    <scope>IDENTIFICATION BY MASS SPECTROMETRY [LARGE SCALE ANALYSIS]</scope>
    <source>
        <tissue>Cervix carcinoma</tissue>
        <tissue>Erythroleukemia</tissue>
    </source>
</reference>
<reference key="24">
    <citation type="journal article" date="2013" name="Mol. Cell. Biol.">
        <title>Phosphorylation of eukaryotic elongation factor 2 (eEF2) by cyclin A-cyclin-dependent kinase 2 regulates its inhibition by eEF2 kinase.</title>
        <authorList>
            <person name="Hizli A.A."/>
            <person name="Chi Y."/>
            <person name="Swanger J."/>
            <person name="Carter J.H."/>
            <person name="Liao Y."/>
            <person name="Welcker M."/>
            <person name="Ryazanov A.G."/>
            <person name="Clurman B.E."/>
        </authorList>
    </citation>
    <scope>PHOSPHORYLATION AT THR-57 AND SER-595</scope>
    <scope>MUTAGENESIS OF SER-595 AND HIS-599</scope>
</reference>
<reference key="25">
    <citation type="journal article" date="2014" name="J. Biol. Chem.">
        <title>C-terminal Src kinase (Csk)-mediated phosphorylation of eukaryotic elongation factor 2 (eEF2) promotes proteolytic cleavage and nuclear translocation of eEF2.</title>
        <authorList>
            <person name="Yao Q."/>
            <person name="Liu B.Q."/>
            <person name="Li H."/>
            <person name="McGarrigle D."/>
            <person name="Xing B.W."/>
            <person name="Zhou M.T."/>
            <person name="Wang Z."/>
            <person name="Zhang J.J."/>
            <person name="Huang X.Y."/>
            <person name="Guo L."/>
        </authorList>
    </citation>
    <scope>PHOSPHORYLATION AT TYR-265 AND TYR-373 BY CSK</scope>
    <scope>SUMOYLATION AT LYS-322 AND LYS-529</scope>
    <scope>PROTEOLYTIC PROCESSING</scope>
    <scope>SUBCELLULAR LOCATION</scope>
</reference>
<reference key="26">
    <citation type="journal article" date="2014" name="J. Biol. Chem.">
        <title>Identification and characterization of a novel evolutionarily conserved lysine-specific methyltransferase targeting eukaryotic translation elongation factor 2 (eEF2).</title>
        <authorList>
            <person name="Davydova E."/>
            <person name="Ho A.Y."/>
            <person name="Malecki J."/>
            <person name="Moen A."/>
            <person name="Enserink J.M."/>
            <person name="Jakobsson M.E."/>
            <person name="Loenarz C."/>
            <person name="Falnes P.O."/>
        </authorList>
    </citation>
    <scope>METHYLATION AT LYS-525</scope>
</reference>
<reference key="27">
    <citation type="journal article" date="2014" name="J. Proteomics">
        <title>An enzyme assisted RP-RPLC approach for in-depth analysis of human liver phosphoproteome.</title>
        <authorList>
            <person name="Bian Y."/>
            <person name="Song C."/>
            <person name="Cheng K."/>
            <person name="Dong M."/>
            <person name="Wang F."/>
            <person name="Huang J."/>
            <person name="Sun D."/>
            <person name="Wang L."/>
            <person name="Ye M."/>
            <person name="Zou H."/>
        </authorList>
    </citation>
    <scope>IDENTIFICATION BY MASS SPECTROMETRY [LARGE SCALE ANALYSIS]</scope>
    <source>
        <tissue>Liver</tissue>
    </source>
</reference>
<reference key="28">
    <citation type="journal article" date="2014" name="Nucleic Acids Res.">
        <title>Homodimerization of RBPMS2 through a new RRM-interaction motif is necessary to control smooth muscle plasticity.</title>
        <authorList>
            <person name="Sagnol S."/>
            <person name="Yang Y."/>
            <person name="Bessin Y."/>
            <person name="Allemand F."/>
            <person name="Hapkova I."/>
            <person name="Notarnicola C."/>
            <person name="Guichou J.F."/>
            <person name="Faure S."/>
            <person name="Labesse G."/>
            <person name="de Santa Barbara P."/>
        </authorList>
    </citation>
    <scope>INTERACTION WITH RBPMS2</scope>
    <scope>SUBCELLULAR LOCATION</scope>
</reference>
<reference key="29">
    <citation type="journal article" date="2014" name="Proc. Natl. Acad. Sci. U.S.A.">
        <title>Mapping of SUMO sites and analysis of SUMOylation changes induced by external stimuli.</title>
        <authorList>
            <person name="Impens F."/>
            <person name="Radoshevich L."/>
            <person name="Cossart P."/>
            <person name="Ribet D."/>
        </authorList>
    </citation>
    <scope>SUMOYLATION [LARGE SCALE ANALYSIS] AT LYS-239</scope>
    <scope>IDENTIFICATION BY MASS SPECTROMETRY [LARGE SCALE ANALYSIS]</scope>
</reference>
<reference key="30">
    <citation type="journal article" date="2015" name="Mol. Cell">
        <title>Functional dynamics within the human ribosome regulate the rate of active protein synthesis.</title>
        <authorList>
            <person name="Ferguson A."/>
            <person name="Wang L."/>
            <person name="Altman R.B."/>
            <person name="Terry D.S."/>
            <person name="Juette M.F."/>
            <person name="Burnett B.J."/>
            <person name="Alejo J.L."/>
            <person name="Dass R.A."/>
            <person name="Parks M.M."/>
            <person name="Vincent C.T."/>
            <person name="Blanchard S.C."/>
        </authorList>
    </citation>
    <scope>FUNCTION</scope>
    <scope>CATALYTIC ACTIVITY</scope>
</reference>
<reference key="31">
    <citation type="journal article" date="2015" name="Proteomics">
        <title>N-terminome analysis of the human mitochondrial proteome.</title>
        <authorList>
            <person name="Vaca Jacome A.S."/>
            <person name="Rabilloud T."/>
            <person name="Schaeffer-Reiss C."/>
            <person name="Rompais M."/>
            <person name="Ayoub D."/>
            <person name="Lane L."/>
            <person name="Bairoch A."/>
            <person name="Van Dorsselaer A."/>
            <person name="Carapito C."/>
        </authorList>
    </citation>
    <scope>CLEAVAGE OF INITIATOR METHIONINE [LARGE SCALE ANALYSIS]</scope>
    <scope>IDENTIFICATION BY MASS SPECTROMETRY [LARGE SCALE ANALYSIS]</scope>
</reference>
<reference key="32">
    <citation type="journal article" date="2016" name="PLoS ONE">
        <title>Evidence for a negative cooperativity between eIF5A and eEF2 on binding to the ribosome.</title>
        <authorList>
            <person name="Rossi D."/>
            <person name="Barbosa N.M."/>
            <person name="Galvao F.C."/>
            <person name="Boldrin P.E."/>
            <person name="Hershey J.W."/>
            <person name="Zanelli C.F."/>
            <person name="Fraser C.S."/>
            <person name="Valentini S.R."/>
        </authorList>
    </citation>
    <scope>RIBOSOME-BINDING</scope>
</reference>
<reference key="33">
    <citation type="journal article" date="2018" name="Elife">
        <title>Structures of translationally inactive mammalian ribosomes.</title>
        <authorList>
            <person name="Brown A."/>
            <person name="Baird M.R."/>
            <person name="Yip M.C."/>
            <person name="Murray J."/>
            <person name="Shao S."/>
        </authorList>
    </citation>
    <scope>RIBOSOME-BINDING</scope>
    <scope>INTERACTION WITH SERBP1</scope>
</reference>
<reference key="34">
    <citation type="journal article" date="2013" name="Nature">
        <title>Structures of the human and Drosophila 80S ribosome.</title>
        <authorList>
            <person name="Anger A.M."/>
            <person name="Armache J.P."/>
            <person name="Berninghausen O."/>
            <person name="Habeck M."/>
            <person name="Subklewe M."/>
            <person name="Wilson D.N."/>
            <person name="Beckmann R."/>
        </authorList>
    </citation>
    <scope>STRUCTURE BY ELECTRON MICROSCOPY (5.0 ANGSTROMS) IN COMPLEX WITH 80S RIBOSOME</scope>
</reference>
<reference evidence="20 21" key="35">
    <citation type="journal article" date="2020" name="PLoS Biol.">
        <title>Structure and function of yeast Lso2 and human CCDC124 bound to hibernating ribosomes.</title>
        <authorList>
            <person name="Wells J.N."/>
            <person name="Buschauer R."/>
            <person name="Mackens-Kiani T."/>
            <person name="Best K."/>
            <person name="Kratzat H."/>
            <person name="Berninghausen O."/>
            <person name="Becker T."/>
            <person name="Gilbert W."/>
            <person name="Cheng J."/>
            <person name="Beckmann R."/>
        </authorList>
    </citation>
    <scope>STRUCTURE BY ELECTRON MICROSCOPY (2.90 ANGSTROMS)</scope>
</reference>
<reference key="36">
    <citation type="journal article" date="2012" name="Hum. Mol. Genet.">
        <title>A conserved eEF2 coding variant in SCA26 leads to loss of translational fidelity and increased susceptibility to proteostatic insult.</title>
        <authorList>
            <person name="Hekman K.E."/>
            <person name="Yu G.Y."/>
            <person name="Brown C.D."/>
            <person name="Zhu H."/>
            <person name="Du X."/>
            <person name="Gervin K."/>
            <person name="Undlien D.E."/>
            <person name="Peterson A."/>
            <person name="Stevanin G."/>
            <person name="Clark H.B."/>
            <person name="Pulst S.M."/>
            <person name="Bird T.D."/>
            <person name="White K.P."/>
            <person name="Gomez C.M."/>
        </authorList>
    </citation>
    <scope>VARIANT SCA26 HIS-596</scope>
    <scope>CHARACTERIZATION OF VARIANT SCA26 HIS-596</scope>
</reference>
<feature type="initiator methionine" description="Removed" evidence="17 26 29">
    <location>
        <position position="1"/>
    </location>
</feature>
<feature type="chain" id="PRO_0000091000" description="Elongation factor 2">
    <location>
        <begin position="2"/>
        <end position="858"/>
    </location>
</feature>
<feature type="domain" description="tr-type G" evidence="5">
    <location>
        <begin position="17"/>
        <end position="362"/>
    </location>
</feature>
<feature type="binding site" evidence="2">
    <location>
        <begin position="26"/>
        <end position="33"/>
    </location>
    <ligand>
        <name>GTP</name>
        <dbReference type="ChEBI" id="CHEBI:37565"/>
    </ligand>
</feature>
<feature type="binding site" evidence="2">
    <location>
        <begin position="158"/>
        <end position="161"/>
    </location>
    <ligand>
        <name>GTP</name>
        <dbReference type="ChEBI" id="CHEBI:37565"/>
    </ligand>
</feature>
<feature type="binding site" evidence="2">
    <location>
        <begin position="216"/>
        <end position="218"/>
    </location>
    <ligand>
        <name>GTP</name>
        <dbReference type="ChEBI" id="CHEBI:37565"/>
    </ligand>
</feature>
<feature type="site" description="Cleavage" evidence="11">
    <location>
        <begin position="586"/>
        <end position="587"/>
    </location>
</feature>
<feature type="site" description="Cleavage" evidence="11">
    <location>
        <begin position="605"/>
        <end position="606"/>
    </location>
</feature>
<feature type="modified residue" description="Phosphothreonine" evidence="25">
    <location>
        <position position="54"/>
    </location>
</feature>
<feature type="modified residue" description="Phosphothreonine; by EEF2K" evidence="10 24 25 27">
    <location>
        <position position="57"/>
    </location>
</feature>
<feature type="modified residue" description="Phosphothreonine" evidence="24 25 27">
    <location>
        <position position="59"/>
    </location>
</feature>
<feature type="modified residue" description="N6-succinyllysine" evidence="3">
    <location>
        <position position="152"/>
    </location>
</feature>
<feature type="modified residue" description="N6-acetyllysine" evidence="23">
    <location>
        <position position="235"/>
    </location>
</feature>
<feature type="modified residue" description="N6-acetyllysine; alternate" evidence="23">
    <location>
        <position position="239"/>
    </location>
</feature>
<feature type="modified residue" description="Phosphotyrosine; by CSK" evidence="11">
    <location>
        <position position="265"/>
    </location>
</feature>
<feature type="modified residue" description="N6-acetyllysine; alternate" evidence="23">
    <location>
        <position position="272"/>
    </location>
</feature>
<feature type="modified residue" description="N6-succinyllysine; alternate" evidence="3">
    <location>
        <position position="272"/>
    </location>
</feature>
<feature type="modified residue" description="N6-acetyllysine" evidence="23">
    <location>
        <position position="275"/>
    </location>
</feature>
<feature type="modified residue" description="Phosphoserine" evidence="1">
    <location>
        <position position="325"/>
    </location>
</feature>
<feature type="modified residue" description="Phosphotyrosine; by CSK" evidence="11">
    <location>
        <position position="373"/>
    </location>
</feature>
<feature type="modified residue" description="Phosphothreonine" evidence="22 24 27">
    <location>
        <position position="435"/>
    </location>
</feature>
<feature type="modified residue" description="N6-acetyllysine" evidence="3">
    <location>
        <position position="439"/>
    </location>
</feature>
<feature type="modified residue" description="N6-acetyllysine" evidence="23">
    <location>
        <position position="445"/>
    </location>
</feature>
<feature type="modified residue" description="Phosphoserine" evidence="22 27">
    <location>
        <position position="502"/>
    </location>
</feature>
<feature type="modified residue" description="N6,N6,N6-trimethyllysine; by EEF2KMT" evidence="13">
    <location>
        <position position="525"/>
    </location>
</feature>
<feature type="modified residue" description="N6-succinyllysine" evidence="3">
    <location>
        <position position="572"/>
    </location>
</feature>
<feature type="modified residue" description="Phosphoserine; by CDK2" evidence="10 27">
    <location>
        <position position="595"/>
    </location>
</feature>
<feature type="modified residue" description="N6-acetyllysine" evidence="3">
    <location>
        <position position="619"/>
    </location>
</feature>
<feature type="modified residue" description="(Microbial infection) ADP-ribosyldiphthamide" evidence="7">
    <location>
        <position position="715"/>
    </location>
</feature>
<feature type="modified residue" description="Diphthamide" evidence="7">
    <location>
        <position position="715"/>
    </location>
</feature>
<feature type="cross-link" description="Glycyl lysine isopeptide (Lys-Gly) (interchain with G-Cter in SUMO1); alternate" evidence="28">
    <location>
        <position position="239"/>
    </location>
</feature>
<feature type="cross-link" description="Glycyl lysine isopeptide (Lys-Gly) (interchain with G-Cter in SUMO)" evidence="11">
    <location>
        <position position="322"/>
    </location>
</feature>
<feature type="cross-link" description="Glycyl lysine isopeptide (Lys-Gly) (interchain with G-Cter in SUMO)" evidence="11">
    <location>
        <position position="529"/>
    </location>
</feature>
<feature type="sequence variant" id="VAR_070792" description="In SCA26; compromises the mechanics of translocation; dbSNP:rs587777052." evidence="9">
    <original>P</original>
    <variation>H</variation>
    <location>
        <position position="596"/>
    </location>
</feature>
<feature type="mutagenesis site" description="Strongly reduced phosphorylation at Thr-57." evidence="10">
    <original>S</original>
    <variation>A</variation>
    <location>
        <position position="595"/>
    </location>
</feature>
<feature type="mutagenesis site" description="Strongly reduced phosphorylation at Thr-57." evidence="10">
    <original>H</original>
    <variation>P</variation>
    <location>
        <position position="599"/>
    </location>
</feature>
<feature type="mutagenesis site" description="Confers resistance to diphtheria toxin." evidence="7">
    <original>H</original>
    <variation>L</variation>
    <variation>M</variation>
    <variation>N</variation>
    <variation>Q</variation>
    <location>
        <position position="715"/>
    </location>
</feature>
<organism>
    <name type="scientific">Homo sapiens</name>
    <name type="common">Human</name>
    <dbReference type="NCBI Taxonomy" id="9606"/>
    <lineage>
        <taxon>Eukaryota</taxon>
        <taxon>Metazoa</taxon>
        <taxon>Chordata</taxon>
        <taxon>Craniata</taxon>
        <taxon>Vertebrata</taxon>
        <taxon>Euteleostomi</taxon>
        <taxon>Mammalia</taxon>
        <taxon>Eutheria</taxon>
        <taxon>Euarchontoglires</taxon>
        <taxon>Primates</taxon>
        <taxon>Haplorrhini</taxon>
        <taxon>Catarrhini</taxon>
        <taxon>Hominidae</taxon>
        <taxon>Homo</taxon>
    </lineage>
</organism>
<dbReference type="EC" id="3.6.5.-" evidence="18"/>
<dbReference type="EMBL" id="X51466">
    <property type="protein sequence ID" value="CAA35829.1"/>
    <property type="molecule type" value="mRNA"/>
</dbReference>
<dbReference type="EMBL" id="Z11692">
    <property type="protein sequence ID" value="CAA77750.1"/>
    <property type="molecule type" value="mRNA"/>
</dbReference>
<dbReference type="EMBL" id="AY942181">
    <property type="protein sequence ID" value="AAX34409.1"/>
    <property type="molecule type" value="mRNA"/>
</dbReference>
<dbReference type="EMBL" id="GQ901037">
    <property type="protein sequence ID" value="ADO22554.1"/>
    <property type="molecule type" value="mRNA"/>
</dbReference>
<dbReference type="EMBL" id="CH471139">
    <property type="protein sequence ID" value="EAW69274.1"/>
    <property type="molecule type" value="Genomic_DNA"/>
</dbReference>
<dbReference type="EMBL" id="CH471139">
    <property type="protein sequence ID" value="EAW69275.1"/>
    <property type="molecule type" value="Genomic_DNA"/>
</dbReference>
<dbReference type="EMBL" id="BC126259">
    <property type="protein sequence ID" value="AAI26260.1"/>
    <property type="molecule type" value="mRNA"/>
</dbReference>
<dbReference type="EMBL" id="BC136313">
    <property type="protein sequence ID" value="AAI36314.1"/>
    <property type="molecule type" value="mRNA"/>
</dbReference>
<dbReference type="EMBL" id="M19997">
    <property type="protein sequence ID" value="AAA50388.1"/>
    <property type="molecule type" value="mRNA"/>
</dbReference>
<dbReference type="CCDS" id="CCDS12117.1"/>
<dbReference type="PIR" id="S18294">
    <property type="entry name" value="EFHU2"/>
</dbReference>
<dbReference type="RefSeq" id="NP_001952.1">
    <property type="nucleotide sequence ID" value="NM_001961.4"/>
</dbReference>
<dbReference type="PDB" id="4V6X">
    <property type="method" value="EM"/>
    <property type="resolution" value="5.00 A"/>
    <property type="chains" value="Az=1-858"/>
</dbReference>
<dbReference type="PDB" id="6D9J">
    <property type="method" value="EM"/>
    <property type="resolution" value="3.20 A"/>
    <property type="chains" value="9=3-858"/>
</dbReference>
<dbReference type="PDB" id="6Z6M">
    <property type="method" value="EM"/>
    <property type="resolution" value="3.10 A"/>
    <property type="chains" value="CB=1-858"/>
</dbReference>
<dbReference type="PDB" id="6Z6N">
    <property type="method" value="EM"/>
    <property type="resolution" value="2.90 A"/>
    <property type="chains" value="CB=1-858"/>
</dbReference>
<dbReference type="PDB" id="8UKB">
    <property type="method" value="EM"/>
    <property type="resolution" value="3.05 A"/>
    <property type="chains" value="CB=3-858"/>
</dbReference>
<dbReference type="PDB" id="8XSX">
    <property type="method" value="EM"/>
    <property type="resolution" value="2.40 A"/>
    <property type="chains" value="CB=1-858"/>
</dbReference>
<dbReference type="PDB" id="8Y0W">
    <property type="method" value="EM"/>
    <property type="resolution" value="3.40 A"/>
    <property type="chains" value="CB=1-858"/>
</dbReference>
<dbReference type="PDB" id="8Y0X">
    <property type="method" value="EM"/>
    <property type="resolution" value="3.30 A"/>
    <property type="chains" value="CB=1-858"/>
</dbReference>
<dbReference type="PDBsum" id="4V6X"/>
<dbReference type="PDBsum" id="6D9J"/>
<dbReference type="PDBsum" id="6Z6M"/>
<dbReference type="PDBsum" id="6Z6N"/>
<dbReference type="PDBsum" id="8UKB"/>
<dbReference type="PDBsum" id="8XSX"/>
<dbReference type="PDBsum" id="8Y0W"/>
<dbReference type="PDBsum" id="8Y0X"/>
<dbReference type="EMDB" id="EMD-11099"/>
<dbReference type="EMDB" id="EMD-11100"/>
<dbReference type="EMDB" id="EMD-38629"/>
<dbReference type="EMDB" id="EMD-42351"/>
<dbReference type="EMDB" id="EMD-7836"/>
<dbReference type="SMR" id="P13639"/>
<dbReference type="BioGRID" id="108258">
    <property type="interactions" value="568"/>
</dbReference>
<dbReference type="CORUM" id="P13639"/>
<dbReference type="FunCoup" id="P13639">
    <property type="interactions" value="2235"/>
</dbReference>
<dbReference type="IntAct" id="P13639">
    <property type="interactions" value="154"/>
</dbReference>
<dbReference type="MINT" id="P13639"/>
<dbReference type="STRING" id="9606.ENSP00000307940"/>
<dbReference type="ChEMBL" id="CHEMBL1795108"/>
<dbReference type="DrugBank" id="DB02059">
    <property type="generic name" value="Adenosine-5-Diphosphoribose"/>
</dbReference>
<dbReference type="DrugBank" id="DB03223">
    <property type="generic name" value="Diphthamide"/>
</dbReference>
<dbReference type="DrugBank" id="DB11823">
    <property type="generic name" value="Esketamine"/>
</dbReference>
<dbReference type="DrugBank" id="DB04315">
    <property type="generic name" value="Guanosine-5'-Diphosphate"/>
</dbReference>
<dbReference type="DrugBank" id="DB12688">
    <property type="generic name" value="Moxetumomab pasudotox"/>
</dbReference>
<dbReference type="DrugBank" id="DB08348">
    <property type="generic name" value="N~2~,N~2~-DIMETHYL-N~1~-(6-OXO-5,6-DIHYDROPHENANTHRIDIN-2-YL)GLYCINAMIDE"/>
</dbReference>
<dbReference type="DrugCentral" id="P13639"/>
<dbReference type="MoonProt" id="P13639"/>
<dbReference type="GlyCosmos" id="P13639">
    <property type="glycosylation" value="1 site, 1 glycan"/>
</dbReference>
<dbReference type="GlyGen" id="P13639">
    <property type="glycosylation" value="5 sites, 2 N-linked glycans (2 sites), 1 O-linked glycan (2 sites)"/>
</dbReference>
<dbReference type="iPTMnet" id="P13639"/>
<dbReference type="MetOSite" id="P13639"/>
<dbReference type="PhosphoSitePlus" id="P13639"/>
<dbReference type="SwissPalm" id="P13639"/>
<dbReference type="BioMuta" id="EEF2"/>
<dbReference type="DMDM" id="119172"/>
<dbReference type="REPRODUCTION-2DPAGE" id="IPI00186290"/>
<dbReference type="jPOST" id="P13639"/>
<dbReference type="MassIVE" id="P13639"/>
<dbReference type="PaxDb" id="9606-ENSP00000307940"/>
<dbReference type="PeptideAtlas" id="P13639"/>
<dbReference type="PRIDE" id="P13639"/>
<dbReference type="ProteomicsDB" id="52947"/>
<dbReference type="Pumba" id="P13639"/>
<dbReference type="Antibodypedia" id="23430">
    <property type="antibodies" value="585 antibodies from 39 providers"/>
</dbReference>
<dbReference type="DNASU" id="1938"/>
<dbReference type="Ensembl" id="ENST00000309311.7">
    <property type="protein sequence ID" value="ENSP00000307940.5"/>
    <property type="gene ID" value="ENSG00000167658.16"/>
</dbReference>
<dbReference type="GeneID" id="1938"/>
<dbReference type="KEGG" id="hsa:1938"/>
<dbReference type="MANE-Select" id="ENST00000309311.7">
    <property type="protein sequence ID" value="ENSP00000307940.5"/>
    <property type="RefSeq nucleotide sequence ID" value="NM_001961.4"/>
    <property type="RefSeq protein sequence ID" value="NP_001952.1"/>
</dbReference>
<dbReference type="UCSC" id="uc002lze.4">
    <property type="organism name" value="human"/>
</dbReference>
<dbReference type="AGR" id="HGNC:3214"/>
<dbReference type="CTD" id="1938"/>
<dbReference type="DisGeNET" id="1938"/>
<dbReference type="GeneCards" id="EEF2"/>
<dbReference type="HGNC" id="HGNC:3214">
    <property type="gene designation" value="EEF2"/>
</dbReference>
<dbReference type="HPA" id="ENSG00000167658">
    <property type="expression patterns" value="Low tissue specificity"/>
</dbReference>
<dbReference type="MalaCards" id="EEF2"/>
<dbReference type="MIM" id="130610">
    <property type="type" value="gene"/>
</dbReference>
<dbReference type="MIM" id="609306">
    <property type="type" value="phenotype"/>
</dbReference>
<dbReference type="neXtProt" id="NX_P13639"/>
<dbReference type="OpenTargets" id="ENSG00000167658"/>
<dbReference type="Orphanet" id="101112">
    <property type="disease" value="Spinocerebellar ataxia type 26"/>
</dbReference>
<dbReference type="PharmGKB" id="PA27650"/>
<dbReference type="VEuPathDB" id="HostDB:ENSG00000167658"/>
<dbReference type="eggNOG" id="KOG0469">
    <property type="taxonomic scope" value="Eukaryota"/>
</dbReference>
<dbReference type="GeneTree" id="ENSGT00940000154662"/>
<dbReference type="HOGENOM" id="CLU_002794_11_1_1"/>
<dbReference type="InParanoid" id="P13639"/>
<dbReference type="OMA" id="SKFAMIY"/>
<dbReference type="OrthoDB" id="364892at2759"/>
<dbReference type="PAN-GO" id="P13639">
    <property type="GO annotations" value="6 GO annotations based on evolutionary models"/>
</dbReference>
<dbReference type="PhylomeDB" id="P13639"/>
<dbReference type="TreeFam" id="TF300575"/>
<dbReference type="BRENDA" id="3.6.5.3">
    <property type="organism ID" value="2681"/>
</dbReference>
<dbReference type="PathwayCommons" id="P13639"/>
<dbReference type="Reactome" id="R-HSA-156902">
    <property type="pathway name" value="Peptide chain elongation"/>
</dbReference>
<dbReference type="Reactome" id="R-HSA-5336415">
    <property type="pathway name" value="Uptake and function of diphtheria toxin"/>
</dbReference>
<dbReference type="Reactome" id="R-HSA-5358493">
    <property type="pathway name" value="Synthesis of diphthamide-EEF2"/>
</dbReference>
<dbReference type="Reactome" id="R-HSA-6798695">
    <property type="pathway name" value="Neutrophil degranulation"/>
</dbReference>
<dbReference type="Reactome" id="R-HSA-8876725">
    <property type="pathway name" value="Protein methylation"/>
</dbReference>
<dbReference type="SignaLink" id="P13639"/>
<dbReference type="SIGNOR" id="P13639"/>
<dbReference type="BioGRID-ORCS" id="1938">
    <property type="hits" value="864 hits in 1145 CRISPR screens"/>
</dbReference>
<dbReference type="CD-CODE" id="91857CE7">
    <property type="entry name" value="Nucleolus"/>
</dbReference>
<dbReference type="CD-CODE" id="DEE660B4">
    <property type="entry name" value="Stress granule"/>
</dbReference>
<dbReference type="CD-CODE" id="FB4E32DD">
    <property type="entry name" value="Presynaptic clusters and postsynaptic densities"/>
</dbReference>
<dbReference type="ChiTaRS" id="EEF2">
    <property type="organism name" value="human"/>
</dbReference>
<dbReference type="GeneWiki" id="EEF2"/>
<dbReference type="GenomeRNAi" id="1938"/>
<dbReference type="Pharos" id="P13639">
    <property type="development level" value="Tchem"/>
</dbReference>
<dbReference type="PRO" id="PR:P13639"/>
<dbReference type="Proteomes" id="UP000005640">
    <property type="component" value="Chromosome 19"/>
</dbReference>
<dbReference type="RNAct" id="P13639">
    <property type="molecule type" value="protein"/>
</dbReference>
<dbReference type="Bgee" id="ENSG00000167658">
    <property type="expression patterns" value="Expressed in parotid gland and 211 other cell types or tissues"/>
</dbReference>
<dbReference type="ExpressionAtlas" id="P13639">
    <property type="expression patterns" value="baseline and differential"/>
</dbReference>
<dbReference type="GO" id="GO:0016235">
    <property type="term" value="C:aggresome"/>
    <property type="evidence" value="ECO:0000314"/>
    <property type="project" value="HPA"/>
</dbReference>
<dbReference type="GO" id="GO:0005737">
    <property type="term" value="C:cytoplasm"/>
    <property type="evidence" value="ECO:0000314"/>
    <property type="project" value="UniProtKB"/>
</dbReference>
<dbReference type="GO" id="GO:0005829">
    <property type="term" value="C:cytosol"/>
    <property type="evidence" value="ECO:0000314"/>
    <property type="project" value="HPA"/>
</dbReference>
<dbReference type="GO" id="GO:0070062">
    <property type="term" value="C:extracellular exosome"/>
    <property type="evidence" value="ECO:0007005"/>
    <property type="project" value="UniProtKB"/>
</dbReference>
<dbReference type="GO" id="GO:0005576">
    <property type="term" value="C:extracellular region"/>
    <property type="evidence" value="ECO:0000304"/>
    <property type="project" value="Reactome"/>
</dbReference>
<dbReference type="GO" id="GO:1904813">
    <property type="term" value="C:ficolin-1-rich granule lumen"/>
    <property type="evidence" value="ECO:0000304"/>
    <property type="project" value="Reactome"/>
</dbReference>
<dbReference type="GO" id="GO:0098978">
    <property type="term" value="C:glutamatergic synapse"/>
    <property type="evidence" value="ECO:0007669"/>
    <property type="project" value="Ensembl"/>
</dbReference>
<dbReference type="GO" id="GO:0016020">
    <property type="term" value="C:membrane"/>
    <property type="evidence" value="ECO:0007005"/>
    <property type="project" value="UniProtKB"/>
</dbReference>
<dbReference type="GO" id="GO:0005634">
    <property type="term" value="C:nucleus"/>
    <property type="evidence" value="ECO:0007005"/>
    <property type="project" value="UniProtKB"/>
</dbReference>
<dbReference type="GO" id="GO:0005886">
    <property type="term" value="C:plasma membrane"/>
    <property type="evidence" value="ECO:0000314"/>
    <property type="project" value="HPA"/>
</dbReference>
<dbReference type="GO" id="GO:0098794">
    <property type="term" value="C:postsynapse"/>
    <property type="evidence" value="ECO:0007669"/>
    <property type="project" value="GOC"/>
</dbReference>
<dbReference type="GO" id="GO:1990904">
    <property type="term" value="C:ribonucleoprotein complex"/>
    <property type="evidence" value="ECO:0000314"/>
    <property type="project" value="MGI"/>
</dbReference>
<dbReference type="GO" id="GO:0005840">
    <property type="term" value="C:ribosome"/>
    <property type="evidence" value="ECO:0007669"/>
    <property type="project" value="Ensembl"/>
</dbReference>
<dbReference type="GO" id="GO:0034774">
    <property type="term" value="C:secretory granule lumen"/>
    <property type="evidence" value="ECO:0000304"/>
    <property type="project" value="Reactome"/>
</dbReference>
<dbReference type="GO" id="GO:0008097">
    <property type="term" value="F:5S rRNA binding"/>
    <property type="evidence" value="ECO:0007669"/>
    <property type="project" value="Ensembl"/>
</dbReference>
<dbReference type="GO" id="GO:0051015">
    <property type="term" value="F:actin filament binding"/>
    <property type="evidence" value="ECO:0007669"/>
    <property type="project" value="Ensembl"/>
</dbReference>
<dbReference type="GO" id="GO:0045296">
    <property type="term" value="F:cadherin binding"/>
    <property type="evidence" value="ECO:0007005"/>
    <property type="project" value="BHF-UCL"/>
</dbReference>
<dbReference type="GO" id="GO:0005525">
    <property type="term" value="F:GTP binding"/>
    <property type="evidence" value="ECO:0007669"/>
    <property type="project" value="UniProtKB-KW"/>
</dbReference>
<dbReference type="GO" id="GO:0003924">
    <property type="term" value="F:GTPase activity"/>
    <property type="evidence" value="ECO:0000314"/>
    <property type="project" value="UniProtKB"/>
</dbReference>
<dbReference type="GO" id="GO:0106222">
    <property type="term" value="F:lncRNA binding"/>
    <property type="evidence" value="ECO:0007669"/>
    <property type="project" value="Ensembl"/>
</dbReference>
<dbReference type="GO" id="GO:0002039">
    <property type="term" value="F:p53 binding"/>
    <property type="evidence" value="ECO:0007669"/>
    <property type="project" value="Ensembl"/>
</dbReference>
<dbReference type="GO" id="GO:0019901">
    <property type="term" value="F:protein kinase binding"/>
    <property type="evidence" value="ECO:0000353"/>
    <property type="project" value="UniProtKB"/>
</dbReference>
<dbReference type="GO" id="GO:0043022">
    <property type="term" value="F:ribosome binding"/>
    <property type="evidence" value="ECO:0000314"/>
    <property type="project" value="FlyBase"/>
</dbReference>
<dbReference type="GO" id="GO:0003723">
    <property type="term" value="F:RNA binding"/>
    <property type="evidence" value="ECO:0007005"/>
    <property type="project" value="UniProtKB"/>
</dbReference>
<dbReference type="GO" id="GO:0003746">
    <property type="term" value="F:translation elongation factor activity"/>
    <property type="evidence" value="ECO:0000314"/>
    <property type="project" value="UniProtKB"/>
</dbReference>
<dbReference type="GO" id="GO:1990416">
    <property type="term" value="P:cellular response to brain-derived neurotrophic factor stimulus"/>
    <property type="evidence" value="ECO:0007669"/>
    <property type="project" value="Ensembl"/>
</dbReference>
<dbReference type="GO" id="GO:0014009">
    <property type="term" value="P:glial cell proliferation"/>
    <property type="evidence" value="ECO:0007669"/>
    <property type="project" value="Ensembl"/>
</dbReference>
<dbReference type="GO" id="GO:0002244">
    <property type="term" value="P:hematopoietic progenitor cell differentiation"/>
    <property type="evidence" value="ECO:0007669"/>
    <property type="project" value="Ensembl"/>
</dbReference>
<dbReference type="GO" id="GO:2000767">
    <property type="term" value="P:positive regulation of cytoplasmic translation"/>
    <property type="evidence" value="ECO:0007669"/>
    <property type="project" value="Ensembl"/>
</dbReference>
<dbReference type="GO" id="GO:0045727">
    <property type="term" value="P:positive regulation of translation"/>
    <property type="evidence" value="ECO:0000315"/>
    <property type="project" value="UniProtKB"/>
</dbReference>
<dbReference type="GO" id="GO:0034976">
    <property type="term" value="P:response to endoplasmic reticulum stress"/>
    <property type="evidence" value="ECO:0007669"/>
    <property type="project" value="Ensembl"/>
</dbReference>
<dbReference type="GO" id="GO:0032355">
    <property type="term" value="P:response to estradiol"/>
    <property type="evidence" value="ECO:0007669"/>
    <property type="project" value="Ensembl"/>
</dbReference>
<dbReference type="GO" id="GO:0045471">
    <property type="term" value="P:response to ethanol"/>
    <property type="evidence" value="ECO:0007669"/>
    <property type="project" value="Ensembl"/>
</dbReference>
<dbReference type="GO" id="GO:0051593">
    <property type="term" value="P:response to folic acid"/>
    <property type="evidence" value="ECO:0007669"/>
    <property type="project" value="Ensembl"/>
</dbReference>
<dbReference type="GO" id="GO:0042542">
    <property type="term" value="P:response to hydrogen peroxide"/>
    <property type="evidence" value="ECO:0007669"/>
    <property type="project" value="Ensembl"/>
</dbReference>
<dbReference type="GO" id="GO:0002931">
    <property type="term" value="P:response to ischemia"/>
    <property type="evidence" value="ECO:0007669"/>
    <property type="project" value="Ensembl"/>
</dbReference>
<dbReference type="GO" id="GO:0009410">
    <property type="term" value="P:response to xenobiotic stimulus"/>
    <property type="evidence" value="ECO:0007669"/>
    <property type="project" value="Ensembl"/>
</dbReference>
<dbReference type="GO" id="GO:0035914">
    <property type="term" value="P:skeletal muscle cell differentiation"/>
    <property type="evidence" value="ECO:0007669"/>
    <property type="project" value="Ensembl"/>
</dbReference>
<dbReference type="GO" id="GO:0003009">
    <property type="term" value="P:skeletal muscle contraction"/>
    <property type="evidence" value="ECO:0007669"/>
    <property type="project" value="Ensembl"/>
</dbReference>
<dbReference type="GO" id="GO:0140242">
    <property type="term" value="P:translation at postsynapse"/>
    <property type="evidence" value="ECO:0007669"/>
    <property type="project" value="Ensembl"/>
</dbReference>
<dbReference type="GO" id="GO:0006414">
    <property type="term" value="P:translational elongation"/>
    <property type="evidence" value="ECO:0000314"/>
    <property type="project" value="UniProtKB"/>
</dbReference>
<dbReference type="CDD" id="cd01681">
    <property type="entry name" value="aeEF2_snRNP_like_IV"/>
    <property type="match status" value="1"/>
</dbReference>
<dbReference type="CDD" id="cd04096">
    <property type="entry name" value="eEF2_snRNP_like_C"/>
    <property type="match status" value="1"/>
</dbReference>
<dbReference type="CDD" id="cd01885">
    <property type="entry name" value="EF2"/>
    <property type="match status" value="1"/>
</dbReference>
<dbReference type="CDD" id="cd16261">
    <property type="entry name" value="EF2_snRNP_III"/>
    <property type="match status" value="1"/>
</dbReference>
<dbReference type="CDD" id="cd03700">
    <property type="entry name" value="EF2_snRNP_like_II"/>
    <property type="match status" value="1"/>
</dbReference>
<dbReference type="FunFam" id="3.90.1430.10:FF:000003">
    <property type="entry name" value="Elongation factor 2"/>
    <property type="match status" value="1"/>
</dbReference>
<dbReference type="FunFam" id="2.40.30.10:FF:000010">
    <property type="entry name" value="Translation elongation factor 2"/>
    <property type="match status" value="1"/>
</dbReference>
<dbReference type="FunFam" id="3.30.230.10:FF:000006">
    <property type="entry name" value="Translation elongation factor 2"/>
    <property type="match status" value="1"/>
</dbReference>
<dbReference type="FunFam" id="3.30.70.240:FF:000003">
    <property type="entry name" value="Translation elongation factor 2"/>
    <property type="match status" value="1"/>
</dbReference>
<dbReference type="FunFam" id="3.30.70.870:FF:000002">
    <property type="entry name" value="Translation elongation factor 2"/>
    <property type="match status" value="1"/>
</dbReference>
<dbReference type="FunFam" id="3.40.50.300:FF:000058">
    <property type="entry name" value="Translation elongation factor 2"/>
    <property type="match status" value="1"/>
</dbReference>
<dbReference type="Gene3D" id="3.30.230.10">
    <property type="match status" value="1"/>
</dbReference>
<dbReference type="Gene3D" id="3.30.70.240">
    <property type="match status" value="1"/>
</dbReference>
<dbReference type="Gene3D" id="3.30.70.870">
    <property type="entry name" value="Elongation Factor G (Translational Gtpase), domain 3"/>
    <property type="match status" value="1"/>
</dbReference>
<dbReference type="Gene3D" id="3.40.50.300">
    <property type="entry name" value="P-loop containing nucleotide triphosphate hydrolases"/>
    <property type="match status" value="1"/>
</dbReference>
<dbReference type="Gene3D" id="2.40.30.10">
    <property type="entry name" value="Translation factors"/>
    <property type="match status" value="1"/>
</dbReference>
<dbReference type="InterPro" id="IPR041095">
    <property type="entry name" value="EFG_II"/>
</dbReference>
<dbReference type="InterPro" id="IPR035647">
    <property type="entry name" value="EFG_III/V"/>
</dbReference>
<dbReference type="InterPro" id="IPR000640">
    <property type="entry name" value="EFG_V-like"/>
</dbReference>
<dbReference type="InterPro" id="IPR004161">
    <property type="entry name" value="EFTu-like_2"/>
</dbReference>
<dbReference type="InterPro" id="IPR031157">
    <property type="entry name" value="G_TR_CS"/>
</dbReference>
<dbReference type="InterPro" id="IPR027417">
    <property type="entry name" value="P-loop_NTPase"/>
</dbReference>
<dbReference type="InterPro" id="IPR020568">
    <property type="entry name" value="Ribosomal_Su5_D2-typ_SF"/>
</dbReference>
<dbReference type="InterPro" id="IPR014721">
    <property type="entry name" value="Ribsml_uS5_D2-typ_fold_subgr"/>
</dbReference>
<dbReference type="InterPro" id="IPR005225">
    <property type="entry name" value="Small_GTP-bd"/>
</dbReference>
<dbReference type="InterPro" id="IPR000795">
    <property type="entry name" value="T_Tr_GTP-bd_dom"/>
</dbReference>
<dbReference type="InterPro" id="IPR009000">
    <property type="entry name" value="Transl_B-barrel_sf"/>
</dbReference>
<dbReference type="InterPro" id="IPR005517">
    <property type="entry name" value="Transl_elong_EFG/EF2_IV"/>
</dbReference>
<dbReference type="NCBIfam" id="TIGR00231">
    <property type="entry name" value="small_GTP"/>
    <property type="match status" value="1"/>
</dbReference>
<dbReference type="PANTHER" id="PTHR42908:SF35">
    <property type="entry name" value="ELONGATION FACTOR 2"/>
    <property type="match status" value="1"/>
</dbReference>
<dbReference type="PANTHER" id="PTHR42908">
    <property type="entry name" value="TRANSLATION ELONGATION FACTOR-RELATED"/>
    <property type="match status" value="1"/>
</dbReference>
<dbReference type="Pfam" id="PF00679">
    <property type="entry name" value="EFG_C"/>
    <property type="match status" value="1"/>
</dbReference>
<dbReference type="Pfam" id="PF14492">
    <property type="entry name" value="EFG_III"/>
    <property type="match status" value="1"/>
</dbReference>
<dbReference type="Pfam" id="PF03764">
    <property type="entry name" value="EFG_IV"/>
    <property type="match status" value="1"/>
</dbReference>
<dbReference type="Pfam" id="PF00009">
    <property type="entry name" value="GTP_EFTU"/>
    <property type="match status" value="1"/>
</dbReference>
<dbReference type="Pfam" id="PF03144">
    <property type="entry name" value="GTP_EFTU_D2"/>
    <property type="match status" value="1"/>
</dbReference>
<dbReference type="PRINTS" id="PR00315">
    <property type="entry name" value="ELONGATNFCT"/>
</dbReference>
<dbReference type="SMART" id="SM00838">
    <property type="entry name" value="EFG_C"/>
    <property type="match status" value="1"/>
</dbReference>
<dbReference type="SMART" id="SM00889">
    <property type="entry name" value="EFG_IV"/>
    <property type="match status" value="1"/>
</dbReference>
<dbReference type="SUPFAM" id="SSF54980">
    <property type="entry name" value="EF-G C-terminal domain-like"/>
    <property type="match status" value="2"/>
</dbReference>
<dbReference type="SUPFAM" id="SSF52540">
    <property type="entry name" value="P-loop containing nucleoside triphosphate hydrolases"/>
    <property type="match status" value="1"/>
</dbReference>
<dbReference type="SUPFAM" id="SSF54211">
    <property type="entry name" value="Ribosomal protein S5 domain 2-like"/>
    <property type="match status" value="1"/>
</dbReference>
<dbReference type="SUPFAM" id="SSF50447">
    <property type="entry name" value="Translation proteins"/>
    <property type="match status" value="1"/>
</dbReference>
<dbReference type="PROSITE" id="PS00301">
    <property type="entry name" value="G_TR_1"/>
    <property type="match status" value="1"/>
</dbReference>
<dbReference type="PROSITE" id="PS51722">
    <property type="entry name" value="G_TR_2"/>
    <property type="match status" value="1"/>
</dbReference>
<proteinExistence type="evidence at protein level"/>
<name>EF2_HUMAN</name>
<protein>
    <recommendedName>
        <fullName>Elongation factor 2</fullName>
        <shortName>EF-2</shortName>
        <ecNumber evidence="18">3.6.5.-</ecNumber>
    </recommendedName>
</protein>
<sequence>MVNFTVDQIRAIMDKKANIRNMSVIAHVDHGKSTLTDSLVCKAGIIASARAGETRFTDTRKDEQERCITIKSTAISLFYELSENDLNFIKQSKDGAGFLINLIDSPGHVDFSSEVTAALRVTDGALVVVDCVSGVCVQTETVLRQAIAERIKPVLMMNKMDRALLELQLEPEELYQTFQRIVENVNVIISTYGEGESGPMGNIMIDPVLGTVGFGSGLHGWAFTLKQFAEMYVAKFAAKGEGQLGPAERAKKVEDMMKKLWGDRYFDPANGKFSKSATSPEGKKLPRTFCQLILDPIFKVFDAIMNFKKEETAKLIEKLDIKLDSEDKDKEGKPLLKAVMRRWLPAGDALLQMITIHLPSPVTAQKYRCELLYEGPPDDEAAMGIKSCDPKGPLMMYISKMVPTSDKGRFYAFGRVFSGLVSTGLKVRIMGPNYTPGKKEDLYLKPIQRTILMMGRYVEPIEDVPCGNIVGLVGVDQFLVKTGTITTFEHAHNMRVMKFSVSPVVRVAVEAKNPADLPKLVEGLKRLAKSDPMVQCIIEESGEHIIAGAGELHLEICLKDLEEDHACIPIKKSDPVVSYRETVSEESNVLCLSKSPNKHNRLYMKARPFPDGLAEDIDKGEVSARQELKQRARYLAEKYEWDVAEARKIWCFGPDGTGPNILTDITKGVQYLNEIKDSVVAGFQWATKEGALCEENMRGVRFDVHDVTLHADAIHRGGGQIIPTARRCLYASVLTAQPRLMEPIYLVEIQCPEQVVGGIYGVLNRKRGHVFEESQVAGTPMFVVKAYLPVNESFGFTADLRSNTGGQAFPQCVFDHWQILPGDPFDNSSRPSQVVAETRKRKGLKEGIPALDNFLDKL</sequence>
<comment type="function">
    <text evidence="14">Catalyzes the GTP-dependent ribosomal translocation step during translation elongation (PubMed:26593721). During this step, the ribosome changes from the pre-translocational (PRE) to the post-translocational (POST) state as the newly formed A-site-bound peptidyl-tRNA and P-site-bound deacylated tRNA move to the P and E sites, respectively (PubMed:26593721). Catalyzes the coordinated movement of the two tRNA molecules, the mRNA and conformational changes in the ribosome (PubMed:26593721).</text>
</comment>
<comment type="catalytic activity">
    <reaction evidence="18">
        <text>GTP + H2O = GDP + phosphate + H(+)</text>
        <dbReference type="Rhea" id="RHEA:19669"/>
        <dbReference type="ChEBI" id="CHEBI:15377"/>
        <dbReference type="ChEBI" id="CHEBI:15378"/>
        <dbReference type="ChEBI" id="CHEBI:37565"/>
        <dbReference type="ChEBI" id="CHEBI:43474"/>
        <dbReference type="ChEBI" id="CHEBI:58189"/>
    </reaction>
    <physiologicalReaction direction="left-to-right" evidence="18">
        <dbReference type="Rhea" id="RHEA:19670"/>
    </physiologicalReaction>
</comment>
<comment type="subunit">
    <text evidence="4 8 12 15 16">Binds to 80S ribosomes (PubMed:27115996, PubMed:30355441). Actively translating ribosomes show mutually exclusive binding of eIF5a (EIF5A or EIF5A2) and EEF2/eEF2 (PubMed:27115996). Interacts with SERBP1; interaction sequesters EEF2/eEF2 at the A-site of the ribosome, thereby blocking the interaction sites of the mRNA-tRNA complex, promoting ribosome stabilization and hibernation (PubMed:30355441). Interacts with HABP4; interaction takes place at the A-site of hibernating ribosomes and promotes ribosome stabilization (By similarity). Component of the mRNA surveillance SURF complex, at least composed of ERF1, ERF3 (ERF3A or ERF3B), EEF2, UPF1/RENT1, SMG1, SMG8 and SMG9 (PubMed:19417104). Interacts with RBPMS2 (PubMed:25064856).</text>
</comment>
<comment type="interaction">
    <interactant intactId="EBI-352560">
        <id>P13639</id>
    </interactant>
    <interactant intactId="EBI-2869927">
        <id>Q9UK97</id>
        <label>FBXO9</label>
    </interactant>
    <organismsDiffer>false</organismsDiffer>
    <experiments>2</experiments>
</comment>
<comment type="interaction">
    <interactant intactId="EBI-352560">
        <id>P13639</id>
    </interactant>
    <interactant intactId="EBI-79964">
        <id>Q99714</id>
        <label>HSD17B10</label>
    </interactant>
    <organismsDiffer>false</organismsDiffer>
    <experiments>3</experiments>
</comment>
<comment type="interaction">
    <interactant intactId="EBI-352560">
        <id>P13639</id>
    </interactant>
    <interactant intactId="EBI-466029">
        <id>P42858</id>
        <label>HTT</label>
    </interactant>
    <organismsDiffer>false</organismsDiffer>
    <experiments>3</experiments>
</comment>
<comment type="subcellular location">
    <subcellularLocation>
        <location evidence="12">Cytoplasm</location>
    </subcellularLocation>
    <subcellularLocation>
        <location evidence="11">Nucleus</location>
    </subcellularLocation>
    <text evidence="11">Phosphorylation by CSK promotes cleavage and SUMOylation-dependent nuclear translocation of the C-terminal cleavage product.</text>
</comment>
<comment type="PTM">
    <text evidence="10 11">Phosphorylation by EF-2 kinase completely inactivates EF-2; it requires prior phosphorylation by CDK2 at Ser-595 during mitotic prometaphase. Phosphorylation by CSK promotes SUMOylation, proteolytic cleavage, and nuclear translocation if the C-terminal fragment.</text>
</comment>
<comment type="PTM">
    <text evidence="1">Diphthamide is 2-[3-carboxyamido-3-(trimethyl-ammonio)propyl]histidine (By similarity).</text>
</comment>
<comment type="PTM">
    <text evidence="7">(Microbial infection) Diphthamide can be ADP-ribosylated by diphtheria toxin and by Pseudomonas exotoxin A, thus arresting protein synthesis.</text>
</comment>
<comment type="PTM">
    <text evidence="6">ISGylated.</text>
</comment>
<comment type="PTM">
    <text evidence="11">Proteolytically processed at two sites following phosphorylation by CSK.</text>
</comment>
<comment type="PTM">
    <text evidence="11">SUMOylated following phosphorylation by CSK, promotes proteolytic cleavage.</text>
</comment>
<comment type="disease" evidence="9">
    <disease id="DI-03933">
        <name>Spinocerebellar ataxia 26</name>
        <acronym>SCA26</acronym>
        <description>A form of spinocerebellar ataxia, a clinically and genetically heterogeneous group of cerebellar disorders. Patients show progressive incoordination of gait and often poor coordination of hands, speech and eye movements, due to degeneration of the cerebellum with variable involvement of the brainstem and spinal cord.</description>
        <dbReference type="MIM" id="609306"/>
    </disease>
    <text>The disease is caused by variants affecting the gene represented in this entry.</text>
</comment>
<comment type="similarity">
    <text evidence="5">Belongs to the TRAFAC class translation factor GTPase superfamily. Classic translation factor GTPase family. EF-G/EF-2 subfamily.</text>
</comment>